<reference key="1">
    <citation type="submission" date="1996-12" db="EMBL/GenBank/DDBJ databases">
        <title>Complete DNA sequence and genomic organization of canine adenovirus type 2.</title>
        <authorList>
            <person name="Campbell J.B."/>
            <person name="Zhao Y."/>
        </authorList>
    </citation>
    <scope>NUCLEOTIDE SEQUENCE [LARGE SCALE GENOMIC DNA]</scope>
</reference>
<gene>
    <name evidence="1" type="primary">L4</name>
</gene>
<accession>P68962</accession>
<accession>Q90097</accession>
<comment type="function">
    <molecule>Hexon-linking protein-N</molecule>
    <text evidence="1">Structural component of the virion that acts as a cement protein on the capsid interior and which glue the peripentonal hexons and group-of-nine hexons together.</text>
</comment>
<comment type="function">
    <molecule>Hexon-linking protein-C</molecule>
    <text evidence="1">Structural component of the virion that acts as a cement protein on the capsid interior and which glue the peripentonal hexons and group-of-nine hexons together.</text>
</comment>
<comment type="subunit">
    <text evidence="1">Interacts with the peripentonal hexons as well as the hexons in the facets. Part of a complex composed of the core-capsid bridging protein, the endosome lysis protein VI and the hexon-linking protein VIII; these interactions bridge the virus core to the capsid.</text>
</comment>
<comment type="subcellular location">
    <molecule>Hexon-linking protein-C</molecule>
    <subcellularLocation>
        <location evidence="1">Virion</location>
    </subcellularLocation>
    <text evidence="1">Located on the inner side of the capsid shell. Present in 120 copies per virion.</text>
</comment>
<comment type="subcellular location">
    <molecule>Pre-hexon-linking protein VIII</molecule>
    <subcellularLocation>
        <location evidence="1">Host nucleus</location>
    </subcellularLocation>
</comment>
<comment type="subcellular location">
    <molecule>Hexon-linking protein-N</molecule>
    <subcellularLocation>
        <location evidence="1">Virion</location>
    </subcellularLocation>
    <text evidence="1">Located on the inner side of the capsid shell. Present in 120 copies per virion.</text>
</comment>
<comment type="induction">
    <text evidence="1">Expressed in the late phase of the viral replicative cycle.</text>
</comment>
<comment type="PTM">
    <text evidence="1">Cleaved by the viral protease during virion maturation. May cause the middle segment to be shed from the capsid.</text>
</comment>
<comment type="miscellaneous">
    <text evidence="1">All late proteins expressed from the major late promoter are produced by alternative splicing and alternative polyadenylation of the same gene giving rise to non-overlapping ORFs. A leader sequence is present in the N-terminus of all these mRNAs and is recognized by the viral shutoff protein to provide expression although conventional translation via ribosome scanning from the cap has been shut off in the host cell.</text>
</comment>
<comment type="similarity">
    <text evidence="1 2">Belongs to the adenoviridae hexon-linking protein family.</text>
</comment>
<proteinExistence type="inferred from homology"/>
<organismHost>
    <name type="scientific">Canis lupus familiaris</name>
    <name type="common">Dog</name>
    <name type="synonym">Canis familiaris</name>
    <dbReference type="NCBI Taxonomy" id="9615"/>
</organismHost>
<dbReference type="EMBL" id="U77082">
    <property type="protein sequence ID" value="AAB38730.1"/>
    <property type="molecule type" value="Genomic_DNA"/>
</dbReference>
<dbReference type="RefSeq" id="AP_000628.1">
    <property type="nucleotide sequence ID" value="AC_000020.1"/>
</dbReference>
<dbReference type="SMR" id="P68962"/>
<dbReference type="Proteomes" id="UP000118097">
    <property type="component" value="Segment"/>
</dbReference>
<dbReference type="GO" id="GO:0042025">
    <property type="term" value="C:host cell nucleus"/>
    <property type="evidence" value="ECO:0007669"/>
    <property type="project" value="UniProtKB-SubCell"/>
</dbReference>
<dbReference type="GO" id="GO:0019028">
    <property type="term" value="C:viral capsid"/>
    <property type="evidence" value="ECO:0007669"/>
    <property type="project" value="UniProtKB-UniRule"/>
</dbReference>
<dbReference type="GO" id="GO:0031423">
    <property type="term" value="F:hexon binding"/>
    <property type="evidence" value="ECO:0007669"/>
    <property type="project" value="InterPro"/>
</dbReference>
<dbReference type="Gene3D" id="6.10.250.1460">
    <property type="match status" value="1"/>
</dbReference>
<dbReference type="HAMAP" id="MF_04049">
    <property type="entry name" value="ADV_CAP8"/>
    <property type="match status" value="1"/>
</dbReference>
<dbReference type="InterPro" id="IPR000646">
    <property type="entry name" value="Adeno_PVIII"/>
</dbReference>
<dbReference type="Pfam" id="PF01310">
    <property type="entry name" value="Adeno_PVIII"/>
    <property type="match status" value="1"/>
</dbReference>
<name>CAP8_ADECT</name>
<feature type="chain" id="PRO_0000421414" description="Pre-hexon-linking protein VIII" evidence="1">
    <location>
        <begin position="1"/>
        <end position="224"/>
    </location>
</feature>
<feature type="peptide" id="PRO_0000421415" description="Hexon-linking protein-N" evidence="1">
    <location>
        <begin position="1"/>
        <end position="111"/>
    </location>
</feature>
<feature type="propeptide" id="PRO_0000036507" evidence="1">
    <location>
        <begin position="112"/>
        <end position="154"/>
    </location>
</feature>
<feature type="peptide" id="PRO_0000036508" description="Hexon-linking protein-C" evidence="1">
    <location>
        <begin position="155"/>
        <end position="224"/>
    </location>
</feature>
<feature type="site" description="Cleavage; by viral protease" evidence="1">
    <location>
        <begin position="111"/>
        <end position="112"/>
    </location>
</feature>
<feature type="site" description="Cleavage; by viral protease" evidence="1">
    <location>
        <begin position="154"/>
        <end position="155"/>
    </location>
</feature>
<feature type="modified residue" description="Phosphothreonine; by host" evidence="1">
    <location>
        <position position="64"/>
    </location>
</feature>
<keyword id="KW-0167">Capsid protein</keyword>
<keyword id="KW-1048">Host nucleus</keyword>
<keyword id="KW-0426">Late protein</keyword>
<keyword id="KW-0597">Phosphoprotein</keyword>
<keyword id="KW-1185">Reference proteome</keyword>
<keyword id="KW-0946">Virion</keyword>
<sequence>MSKEIPTPYMWSYQPQTGHAAGASQDYSTQMNWFSAGPSMISQVYGIRDLRNKVLITQAEITKTPRTIMDPPIWPAAMLVQEAAPPKTVTLPRNHTLEQAMTNSGAQLAGGRQLCPSQIGIKSPVLAGTGIQLSEDIPSASWIRPDGIFQLGGGSRSSFSPTQAFLTLQQASSTPRAGGVGTYQFVREFVPEVYLNPFSGPPDTFPDQFIPNYDIVTNSVDGYD</sequence>
<evidence type="ECO:0000255" key="1">
    <source>
        <dbReference type="HAMAP-Rule" id="MF_04049"/>
    </source>
</evidence>
<evidence type="ECO:0000305" key="2"/>
<protein>
    <recommendedName>
        <fullName evidence="1">Pre-hexon-linking protein VIII</fullName>
    </recommendedName>
    <alternativeName>
        <fullName evidence="1">Pre-protein VIII</fullName>
        <shortName evidence="1">pVIII</shortName>
    </alternativeName>
    <component>
        <recommendedName>
            <fullName evidence="1">Hexon-linking protein-N</fullName>
        </recommendedName>
        <alternativeName>
            <fullName evidence="1">12.1 kDa protein VIII</fullName>
        </alternativeName>
        <alternativeName>
            <fullName evidence="1">Protein VIII-N</fullName>
        </alternativeName>
    </component>
    <component>
        <recommendedName>
            <fullName evidence="1">Hexon-linking protein-C</fullName>
        </recommendedName>
        <alternativeName>
            <fullName evidence="1">7.6 kDa protein VIII</fullName>
        </alternativeName>
        <alternativeName>
            <fullName evidence="1">Protein VIII-C</fullName>
        </alternativeName>
    </component>
</protein>
<organism>
    <name type="scientific">Canine adenovirus serotype 2 (strain Toronto A 26-61)</name>
    <name type="common">CAdV-2</name>
    <name type="synonym">Canine adenovirus 2 (strain Toronto A 26-61)</name>
    <dbReference type="NCBI Taxonomy" id="69152"/>
    <lineage>
        <taxon>Viruses</taxon>
        <taxon>Varidnaviria</taxon>
        <taxon>Bamfordvirae</taxon>
        <taxon>Preplasmiviricota</taxon>
        <taxon>Tectiliviricetes</taxon>
        <taxon>Rowavirales</taxon>
        <taxon>Adenoviridae</taxon>
        <taxon>Mastadenovirus</taxon>
        <taxon>Canine mastadenovirus A</taxon>
    </lineage>
</organism>